<name>RL34_ENT38</name>
<organism>
    <name type="scientific">Enterobacter sp. (strain 638)</name>
    <dbReference type="NCBI Taxonomy" id="399742"/>
    <lineage>
        <taxon>Bacteria</taxon>
        <taxon>Pseudomonadati</taxon>
        <taxon>Pseudomonadota</taxon>
        <taxon>Gammaproteobacteria</taxon>
        <taxon>Enterobacterales</taxon>
        <taxon>Enterobacteriaceae</taxon>
        <taxon>Enterobacter</taxon>
    </lineage>
</organism>
<evidence type="ECO:0000255" key="1">
    <source>
        <dbReference type="HAMAP-Rule" id="MF_00391"/>
    </source>
</evidence>
<evidence type="ECO:0000256" key="2">
    <source>
        <dbReference type="SAM" id="MobiDB-lite"/>
    </source>
</evidence>
<evidence type="ECO:0000305" key="3"/>
<protein>
    <recommendedName>
        <fullName evidence="1">Large ribosomal subunit protein bL34</fullName>
    </recommendedName>
    <alternativeName>
        <fullName evidence="3">50S ribosomal protein L34</fullName>
    </alternativeName>
</protein>
<accession>A4WGH5</accession>
<gene>
    <name evidence="1" type="primary">rpmH</name>
    <name type="ordered locus">Ent638_4152</name>
</gene>
<feature type="chain" id="PRO_1000060756" description="Large ribosomal subunit protein bL34">
    <location>
        <begin position="1"/>
        <end position="46"/>
    </location>
</feature>
<feature type="region of interest" description="Disordered" evidence="2">
    <location>
        <begin position="26"/>
        <end position="46"/>
    </location>
</feature>
<feature type="compositionally biased region" description="Basic residues" evidence="2">
    <location>
        <begin position="31"/>
        <end position="40"/>
    </location>
</feature>
<sequence length="46" mass="5426">MKRTFQPSVLKRNRSHGFRARMATKNGRQVLARRRAKSRSRLTVSK</sequence>
<keyword id="KW-0687">Ribonucleoprotein</keyword>
<keyword id="KW-0689">Ribosomal protein</keyword>
<dbReference type="EMBL" id="CP000653">
    <property type="protein sequence ID" value="ABP62805.1"/>
    <property type="molecule type" value="Genomic_DNA"/>
</dbReference>
<dbReference type="RefSeq" id="WP_002220736.1">
    <property type="nucleotide sequence ID" value="NC_009436.1"/>
</dbReference>
<dbReference type="SMR" id="A4WGH5"/>
<dbReference type="STRING" id="399742.Ent638_4152"/>
<dbReference type="GeneID" id="97458397"/>
<dbReference type="KEGG" id="ent:Ent638_4152"/>
<dbReference type="eggNOG" id="COG0230">
    <property type="taxonomic scope" value="Bacteria"/>
</dbReference>
<dbReference type="HOGENOM" id="CLU_129938_2_1_6"/>
<dbReference type="OrthoDB" id="9804164at2"/>
<dbReference type="Proteomes" id="UP000000230">
    <property type="component" value="Chromosome"/>
</dbReference>
<dbReference type="GO" id="GO:1990904">
    <property type="term" value="C:ribonucleoprotein complex"/>
    <property type="evidence" value="ECO:0007669"/>
    <property type="project" value="UniProtKB-KW"/>
</dbReference>
<dbReference type="GO" id="GO:0005840">
    <property type="term" value="C:ribosome"/>
    <property type="evidence" value="ECO:0007669"/>
    <property type="project" value="UniProtKB-KW"/>
</dbReference>
<dbReference type="GO" id="GO:0003735">
    <property type="term" value="F:structural constituent of ribosome"/>
    <property type="evidence" value="ECO:0007669"/>
    <property type="project" value="InterPro"/>
</dbReference>
<dbReference type="GO" id="GO:0006412">
    <property type="term" value="P:translation"/>
    <property type="evidence" value="ECO:0007669"/>
    <property type="project" value="UniProtKB-UniRule"/>
</dbReference>
<dbReference type="FunFam" id="1.10.287.3980:FF:000001">
    <property type="entry name" value="Mitochondrial ribosomal protein L34"/>
    <property type="match status" value="1"/>
</dbReference>
<dbReference type="Gene3D" id="1.10.287.3980">
    <property type="match status" value="1"/>
</dbReference>
<dbReference type="HAMAP" id="MF_00391">
    <property type="entry name" value="Ribosomal_bL34"/>
    <property type="match status" value="1"/>
</dbReference>
<dbReference type="InterPro" id="IPR000271">
    <property type="entry name" value="Ribosomal_bL34"/>
</dbReference>
<dbReference type="InterPro" id="IPR020939">
    <property type="entry name" value="Ribosomal_bL34_CS"/>
</dbReference>
<dbReference type="NCBIfam" id="TIGR01030">
    <property type="entry name" value="rpmH_bact"/>
    <property type="match status" value="1"/>
</dbReference>
<dbReference type="PANTHER" id="PTHR14503:SF4">
    <property type="entry name" value="LARGE RIBOSOMAL SUBUNIT PROTEIN BL34M"/>
    <property type="match status" value="1"/>
</dbReference>
<dbReference type="PANTHER" id="PTHR14503">
    <property type="entry name" value="MITOCHONDRIAL RIBOSOMAL PROTEIN 34 FAMILY MEMBER"/>
    <property type="match status" value="1"/>
</dbReference>
<dbReference type="Pfam" id="PF00468">
    <property type="entry name" value="Ribosomal_L34"/>
    <property type="match status" value="1"/>
</dbReference>
<dbReference type="PROSITE" id="PS00784">
    <property type="entry name" value="RIBOSOMAL_L34"/>
    <property type="match status" value="1"/>
</dbReference>
<comment type="similarity">
    <text evidence="1">Belongs to the bacterial ribosomal protein bL34 family.</text>
</comment>
<proteinExistence type="inferred from homology"/>
<reference key="1">
    <citation type="journal article" date="2010" name="PLoS Genet.">
        <title>Genome sequence of the plant growth promoting endophytic bacterium Enterobacter sp. 638.</title>
        <authorList>
            <person name="Taghavi S."/>
            <person name="van der Lelie D."/>
            <person name="Hoffman A."/>
            <person name="Zhang Y.B."/>
            <person name="Walla M.D."/>
            <person name="Vangronsveld J."/>
            <person name="Newman L."/>
            <person name="Monchy S."/>
        </authorList>
    </citation>
    <scope>NUCLEOTIDE SEQUENCE [LARGE SCALE GENOMIC DNA]</scope>
    <source>
        <strain>638</strain>
    </source>
</reference>